<proteinExistence type="inferred from homology"/>
<keyword id="KW-0131">Cell cycle</keyword>
<keyword id="KW-0132">Cell division</keyword>
<keyword id="KW-0133">Cell shape</keyword>
<keyword id="KW-0961">Cell wall biogenesis/degradation</keyword>
<keyword id="KW-0963">Cytoplasm</keyword>
<keyword id="KW-0573">Peptidoglycan synthesis</keyword>
<keyword id="KW-0670">Pyruvate</keyword>
<keyword id="KW-1185">Reference proteome</keyword>
<keyword id="KW-0808">Transferase</keyword>
<protein>
    <recommendedName>
        <fullName evidence="1">UDP-N-acetylglucosamine 1-carboxyvinyltransferase 2</fullName>
        <ecNumber evidence="1">2.5.1.7</ecNumber>
    </recommendedName>
    <alternativeName>
        <fullName evidence="1">Enoylpyruvate transferase 2</fullName>
    </alternativeName>
    <alternativeName>
        <fullName evidence="1">UDP-N-acetylglucosamine enolpyruvyl transferase 2</fullName>
        <shortName evidence="1">EPT 2</shortName>
    </alternativeName>
</protein>
<gene>
    <name evidence="1" type="primary">murA2</name>
    <name type="synonym">murZ</name>
    <name type="ordered locus">lmo2552</name>
</gene>
<feature type="chain" id="PRO_0000178888" description="UDP-N-acetylglucosamine 1-carboxyvinyltransferase 2">
    <location>
        <begin position="1"/>
        <end position="423"/>
    </location>
</feature>
<feature type="active site" description="Proton donor" evidence="1">
    <location>
        <position position="117"/>
    </location>
</feature>
<feature type="binding site" evidence="1">
    <location>
        <begin position="23"/>
        <end position="24"/>
    </location>
    <ligand>
        <name>phosphoenolpyruvate</name>
        <dbReference type="ChEBI" id="CHEBI:58702"/>
    </ligand>
</feature>
<feature type="binding site" evidence="1">
    <location>
        <position position="93"/>
    </location>
    <ligand>
        <name>UDP-N-acetyl-alpha-D-glucosamine</name>
        <dbReference type="ChEBI" id="CHEBI:57705"/>
    </ligand>
</feature>
<feature type="binding site" evidence="1">
    <location>
        <begin position="122"/>
        <end position="126"/>
    </location>
    <ligand>
        <name>UDP-N-acetyl-alpha-D-glucosamine</name>
        <dbReference type="ChEBI" id="CHEBI:57705"/>
    </ligand>
</feature>
<feature type="binding site" evidence="1">
    <location>
        <position position="305"/>
    </location>
    <ligand>
        <name>UDP-N-acetyl-alpha-D-glucosamine</name>
        <dbReference type="ChEBI" id="CHEBI:57705"/>
    </ligand>
</feature>
<feature type="binding site" evidence="1">
    <location>
        <position position="327"/>
    </location>
    <ligand>
        <name>UDP-N-acetyl-alpha-D-glucosamine</name>
        <dbReference type="ChEBI" id="CHEBI:57705"/>
    </ligand>
</feature>
<feature type="modified residue" description="2-(S-cysteinyl)pyruvic acid O-phosphothioketal" evidence="1">
    <location>
        <position position="117"/>
    </location>
</feature>
<dbReference type="EC" id="2.5.1.7" evidence="1"/>
<dbReference type="EMBL" id="AL591983">
    <property type="protein sequence ID" value="CAD00630.1"/>
    <property type="molecule type" value="Genomic_DNA"/>
</dbReference>
<dbReference type="PIR" id="AH1393">
    <property type="entry name" value="AH1393"/>
</dbReference>
<dbReference type="RefSeq" id="NP_466075.1">
    <property type="nucleotide sequence ID" value="NC_003210.1"/>
</dbReference>
<dbReference type="RefSeq" id="WP_003732525.1">
    <property type="nucleotide sequence ID" value="NZ_CP149495.1"/>
</dbReference>
<dbReference type="SMR" id="Q8Y4A2"/>
<dbReference type="STRING" id="169963.gene:17595263"/>
<dbReference type="PaxDb" id="169963-lmo2552"/>
<dbReference type="EnsemblBacteria" id="CAD00630">
    <property type="protein sequence ID" value="CAD00630"/>
    <property type="gene ID" value="CAD00630"/>
</dbReference>
<dbReference type="GeneID" id="987263"/>
<dbReference type="KEGG" id="lmo:lmo2552"/>
<dbReference type="PATRIC" id="fig|169963.11.peg.2614"/>
<dbReference type="eggNOG" id="COG0766">
    <property type="taxonomic scope" value="Bacteria"/>
</dbReference>
<dbReference type="HOGENOM" id="CLU_027387_0_0_9"/>
<dbReference type="OrthoDB" id="9803760at2"/>
<dbReference type="PhylomeDB" id="Q8Y4A2"/>
<dbReference type="BioCyc" id="LMON169963:LMO2552-MONOMER"/>
<dbReference type="UniPathway" id="UPA00219"/>
<dbReference type="Proteomes" id="UP000000817">
    <property type="component" value="Chromosome"/>
</dbReference>
<dbReference type="GO" id="GO:0005737">
    <property type="term" value="C:cytoplasm"/>
    <property type="evidence" value="ECO:0007669"/>
    <property type="project" value="UniProtKB-SubCell"/>
</dbReference>
<dbReference type="GO" id="GO:0008760">
    <property type="term" value="F:UDP-N-acetylglucosamine 1-carboxyvinyltransferase activity"/>
    <property type="evidence" value="ECO:0007669"/>
    <property type="project" value="UniProtKB-UniRule"/>
</dbReference>
<dbReference type="GO" id="GO:0051301">
    <property type="term" value="P:cell division"/>
    <property type="evidence" value="ECO:0007669"/>
    <property type="project" value="UniProtKB-KW"/>
</dbReference>
<dbReference type="GO" id="GO:0071555">
    <property type="term" value="P:cell wall organization"/>
    <property type="evidence" value="ECO:0007669"/>
    <property type="project" value="UniProtKB-KW"/>
</dbReference>
<dbReference type="GO" id="GO:0009252">
    <property type="term" value="P:peptidoglycan biosynthetic process"/>
    <property type="evidence" value="ECO:0007669"/>
    <property type="project" value="UniProtKB-UniRule"/>
</dbReference>
<dbReference type="GO" id="GO:0008360">
    <property type="term" value="P:regulation of cell shape"/>
    <property type="evidence" value="ECO:0007669"/>
    <property type="project" value="UniProtKB-KW"/>
</dbReference>
<dbReference type="GO" id="GO:0019277">
    <property type="term" value="P:UDP-N-acetylgalactosamine biosynthetic process"/>
    <property type="evidence" value="ECO:0007669"/>
    <property type="project" value="InterPro"/>
</dbReference>
<dbReference type="CDD" id="cd01555">
    <property type="entry name" value="UdpNAET"/>
    <property type="match status" value="1"/>
</dbReference>
<dbReference type="FunFam" id="3.65.10.10:FF:000001">
    <property type="entry name" value="UDP-N-acetylglucosamine 1-carboxyvinyltransferase"/>
    <property type="match status" value="1"/>
</dbReference>
<dbReference type="Gene3D" id="3.65.10.10">
    <property type="entry name" value="Enolpyruvate transferase domain"/>
    <property type="match status" value="2"/>
</dbReference>
<dbReference type="HAMAP" id="MF_00111">
    <property type="entry name" value="MurA"/>
    <property type="match status" value="1"/>
</dbReference>
<dbReference type="InterPro" id="IPR001986">
    <property type="entry name" value="Enolpyruvate_Tfrase_dom"/>
</dbReference>
<dbReference type="InterPro" id="IPR036968">
    <property type="entry name" value="Enolpyruvate_Tfrase_sf"/>
</dbReference>
<dbReference type="InterPro" id="IPR050068">
    <property type="entry name" value="MurA_subfamily"/>
</dbReference>
<dbReference type="InterPro" id="IPR013792">
    <property type="entry name" value="RNA3'P_cycl/enolpyr_Trfase_a/b"/>
</dbReference>
<dbReference type="InterPro" id="IPR005750">
    <property type="entry name" value="UDP_GlcNAc_COvinyl_MurA"/>
</dbReference>
<dbReference type="NCBIfam" id="TIGR01072">
    <property type="entry name" value="murA"/>
    <property type="match status" value="1"/>
</dbReference>
<dbReference type="NCBIfam" id="NF006873">
    <property type="entry name" value="PRK09369.1"/>
    <property type="match status" value="1"/>
</dbReference>
<dbReference type="NCBIfam" id="NF009470">
    <property type="entry name" value="PRK12830.1"/>
    <property type="match status" value="1"/>
</dbReference>
<dbReference type="PANTHER" id="PTHR43783">
    <property type="entry name" value="UDP-N-ACETYLGLUCOSAMINE 1-CARBOXYVINYLTRANSFERASE"/>
    <property type="match status" value="1"/>
</dbReference>
<dbReference type="PANTHER" id="PTHR43783:SF2">
    <property type="entry name" value="UDP-N-ACETYLGLUCOSAMINE 1-CARBOXYVINYLTRANSFERASE 2"/>
    <property type="match status" value="1"/>
</dbReference>
<dbReference type="Pfam" id="PF00275">
    <property type="entry name" value="EPSP_synthase"/>
    <property type="match status" value="1"/>
</dbReference>
<dbReference type="SUPFAM" id="SSF55205">
    <property type="entry name" value="EPT/RTPC-like"/>
    <property type="match status" value="1"/>
</dbReference>
<sequence length="423" mass="45104">MTDRLIIQGGKKLSGTLQVDGAKNSAVALIPAAILAESEVVLEGLPDISDVYTLYDILEELGGSVRYDNKTAIIDPTDMLSMPLPSGNVKKLRASYYLMGAMLGRFKKAVIGLPGGCYLGPRPIDQHIKGFEALGAKVTNEQGAIYLRADELKGARIYLDVVSVGATINIMLAAVRAKGKTVIENAAKEPEIIDVATLLTNMGAIIKGAGTDTIRITGVDHLHGCHHTIIPDRIEAGTFMVLAAASGKGIRIENVIPTHLEGIIAKLTEMGVPMDIEEDSIFIGEVENIKKVDIKTYAYPGFPTDLQQPLTALLTRAEGSSVITDTIYPSRFKHIAELERMGGKFKLEGRSAVISGPAKLQGSKVTATDLRAGAALVIAGLLAEGRTEIHGVEHIERGYSKIIEKLSAIGADITRSSTAETNI</sequence>
<name>MURA2_LISMO</name>
<accession>Q8Y4A2</accession>
<reference key="1">
    <citation type="journal article" date="2001" name="Science">
        <title>Comparative genomics of Listeria species.</title>
        <authorList>
            <person name="Glaser P."/>
            <person name="Frangeul L."/>
            <person name="Buchrieser C."/>
            <person name="Rusniok C."/>
            <person name="Amend A."/>
            <person name="Baquero F."/>
            <person name="Berche P."/>
            <person name="Bloecker H."/>
            <person name="Brandt P."/>
            <person name="Chakraborty T."/>
            <person name="Charbit A."/>
            <person name="Chetouani F."/>
            <person name="Couve E."/>
            <person name="de Daruvar A."/>
            <person name="Dehoux P."/>
            <person name="Domann E."/>
            <person name="Dominguez-Bernal G."/>
            <person name="Duchaud E."/>
            <person name="Durant L."/>
            <person name="Dussurget O."/>
            <person name="Entian K.-D."/>
            <person name="Fsihi H."/>
            <person name="Garcia-del Portillo F."/>
            <person name="Garrido P."/>
            <person name="Gautier L."/>
            <person name="Goebel W."/>
            <person name="Gomez-Lopez N."/>
            <person name="Hain T."/>
            <person name="Hauf J."/>
            <person name="Jackson D."/>
            <person name="Jones L.-M."/>
            <person name="Kaerst U."/>
            <person name="Kreft J."/>
            <person name="Kuhn M."/>
            <person name="Kunst F."/>
            <person name="Kurapkat G."/>
            <person name="Madueno E."/>
            <person name="Maitournam A."/>
            <person name="Mata Vicente J."/>
            <person name="Ng E."/>
            <person name="Nedjari H."/>
            <person name="Nordsiek G."/>
            <person name="Novella S."/>
            <person name="de Pablos B."/>
            <person name="Perez-Diaz J.-C."/>
            <person name="Purcell R."/>
            <person name="Remmel B."/>
            <person name="Rose M."/>
            <person name="Schlueter T."/>
            <person name="Simoes N."/>
            <person name="Tierrez A."/>
            <person name="Vazquez-Boland J.-A."/>
            <person name="Voss H."/>
            <person name="Wehland J."/>
            <person name="Cossart P."/>
        </authorList>
    </citation>
    <scope>NUCLEOTIDE SEQUENCE [LARGE SCALE GENOMIC DNA]</scope>
    <source>
        <strain>ATCC BAA-679 / EGD-e</strain>
    </source>
</reference>
<organism>
    <name type="scientific">Listeria monocytogenes serovar 1/2a (strain ATCC BAA-679 / EGD-e)</name>
    <dbReference type="NCBI Taxonomy" id="169963"/>
    <lineage>
        <taxon>Bacteria</taxon>
        <taxon>Bacillati</taxon>
        <taxon>Bacillota</taxon>
        <taxon>Bacilli</taxon>
        <taxon>Bacillales</taxon>
        <taxon>Listeriaceae</taxon>
        <taxon>Listeria</taxon>
    </lineage>
</organism>
<comment type="function">
    <text evidence="1">Cell wall formation. Adds enolpyruvyl to UDP-N-acetylglucosamine.</text>
</comment>
<comment type="catalytic activity">
    <reaction evidence="1">
        <text>phosphoenolpyruvate + UDP-N-acetyl-alpha-D-glucosamine = UDP-N-acetyl-3-O-(1-carboxyvinyl)-alpha-D-glucosamine + phosphate</text>
        <dbReference type="Rhea" id="RHEA:18681"/>
        <dbReference type="ChEBI" id="CHEBI:43474"/>
        <dbReference type="ChEBI" id="CHEBI:57705"/>
        <dbReference type="ChEBI" id="CHEBI:58702"/>
        <dbReference type="ChEBI" id="CHEBI:68483"/>
        <dbReference type="EC" id="2.5.1.7"/>
    </reaction>
</comment>
<comment type="pathway">
    <text evidence="1">Cell wall biogenesis; peptidoglycan biosynthesis.</text>
</comment>
<comment type="subcellular location">
    <subcellularLocation>
        <location evidence="1">Cytoplasm</location>
    </subcellularLocation>
</comment>
<comment type="similarity">
    <text evidence="1">Belongs to the EPSP synthase family. MurA subfamily.</text>
</comment>
<evidence type="ECO:0000255" key="1">
    <source>
        <dbReference type="HAMAP-Rule" id="MF_00111"/>
    </source>
</evidence>